<comment type="function">
    <text evidence="1">Transfers the gamma-phosphate of ATP to the 4'-position of a tetraacyldisaccharide 1-phosphate intermediate (termed DS-1-P) to form tetraacyldisaccharide 1,4'-bis-phosphate (lipid IVA).</text>
</comment>
<comment type="catalytic activity">
    <reaction evidence="1">
        <text>a lipid A disaccharide + ATP = a lipid IVA + ADP + H(+)</text>
        <dbReference type="Rhea" id="RHEA:67840"/>
        <dbReference type="ChEBI" id="CHEBI:15378"/>
        <dbReference type="ChEBI" id="CHEBI:30616"/>
        <dbReference type="ChEBI" id="CHEBI:176343"/>
        <dbReference type="ChEBI" id="CHEBI:176425"/>
        <dbReference type="ChEBI" id="CHEBI:456216"/>
        <dbReference type="EC" id="2.7.1.130"/>
    </reaction>
</comment>
<comment type="pathway">
    <text evidence="1">Glycolipid biosynthesis; lipid IV(A) biosynthesis; lipid IV(A) from (3R)-3-hydroxytetradecanoyl-[acyl-carrier-protein] and UDP-N-acetyl-alpha-D-glucosamine: step 6/6.</text>
</comment>
<comment type="similarity">
    <text evidence="1">Belongs to the LpxK family.</text>
</comment>
<organism>
    <name type="scientific">Yersinia pestis bv. Antiqua (strain Angola)</name>
    <dbReference type="NCBI Taxonomy" id="349746"/>
    <lineage>
        <taxon>Bacteria</taxon>
        <taxon>Pseudomonadati</taxon>
        <taxon>Pseudomonadota</taxon>
        <taxon>Gammaproteobacteria</taxon>
        <taxon>Enterobacterales</taxon>
        <taxon>Yersiniaceae</taxon>
        <taxon>Yersinia</taxon>
    </lineage>
</organism>
<gene>
    <name evidence="1" type="primary">lpxK</name>
    <name type="ordered locus">YpAngola_A1960</name>
</gene>
<protein>
    <recommendedName>
        <fullName evidence="1">Tetraacyldisaccharide 4'-kinase</fullName>
        <ecNumber evidence="1">2.7.1.130</ecNumber>
    </recommendedName>
    <alternativeName>
        <fullName evidence="1">Lipid A 4'-kinase</fullName>
    </alternativeName>
</protein>
<dbReference type="EC" id="2.7.1.130" evidence="1"/>
<dbReference type="EMBL" id="CP000901">
    <property type="protein sequence ID" value="ABX86157.1"/>
    <property type="molecule type" value="Genomic_DNA"/>
</dbReference>
<dbReference type="RefSeq" id="WP_002211319.1">
    <property type="nucleotide sequence ID" value="NZ_CP009935.1"/>
</dbReference>
<dbReference type="SMR" id="A9R7I8"/>
<dbReference type="GeneID" id="57977192"/>
<dbReference type="KEGG" id="ypg:YpAngola_A1960"/>
<dbReference type="PATRIC" id="fig|349746.12.peg.2936"/>
<dbReference type="UniPathway" id="UPA00359">
    <property type="reaction ID" value="UER00482"/>
</dbReference>
<dbReference type="GO" id="GO:0005886">
    <property type="term" value="C:plasma membrane"/>
    <property type="evidence" value="ECO:0007669"/>
    <property type="project" value="TreeGrafter"/>
</dbReference>
<dbReference type="GO" id="GO:0005524">
    <property type="term" value="F:ATP binding"/>
    <property type="evidence" value="ECO:0007669"/>
    <property type="project" value="UniProtKB-UniRule"/>
</dbReference>
<dbReference type="GO" id="GO:0009029">
    <property type="term" value="F:tetraacyldisaccharide 4'-kinase activity"/>
    <property type="evidence" value="ECO:0007669"/>
    <property type="project" value="UniProtKB-UniRule"/>
</dbReference>
<dbReference type="GO" id="GO:0009245">
    <property type="term" value="P:lipid A biosynthetic process"/>
    <property type="evidence" value="ECO:0007669"/>
    <property type="project" value="UniProtKB-UniRule"/>
</dbReference>
<dbReference type="GO" id="GO:0009244">
    <property type="term" value="P:lipopolysaccharide core region biosynthetic process"/>
    <property type="evidence" value="ECO:0007669"/>
    <property type="project" value="TreeGrafter"/>
</dbReference>
<dbReference type="Gene3D" id="3.40.50.300">
    <property type="entry name" value="P-loop containing nucleotide triphosphate hydrolases"/>
    <property type="match status" value="1"/>
</dbReference>
<dbReference type="HAMAP" id="MF_00409">
    <property type="entry name" value="LpxK"/>
    <property type="match status" value="1"/>
</dbReference>
<dbReference type="InterPro" id="IPR003758">
    <property type="entry name" value="LpxK"/>
</dbReference>
<dbReference type="InterPro" id="IPR027417">
    <property type="entry name" value="P-loop_NTPase"/>
</dbReference>
<dbReference type="NCBIfam" id="TIGR00682">
    <property type="entry name" value="lpxK"/>
    <property type="match status" value="1"/>
</dbReference>
<dbReference type="PANTHER" id="PTHR42724">
    <property type="entry name" value="TETRAACYLDISACCHARIDE 4'-KINASE"/>
    <property type="match status" value="1"/>
</dbReference>
<dbReference type="PANTHER" id="PTHR42724:SF1">
    <property type="entry name" value="TETRAACYLDISACCHARIDE 4'-KINASE, MITOCHONDRIAL-RELATED"/>
    <property type="match status" value="1"/>
</dbReference>
<dbReference type="Pfam" id="PF02606">
    <property type="entry name" value="LpxK"/>
    <property type="match status" value="1"/>
</dbReference>
<dbReference type="SUPFAM" id="SSF52540">
    <property type="entry name" value="P-loop containing nucleoside triphosphate hydrolases"/>
    <property type="match status" value="1"/>
</dbReference>
<feature type="chain" id="PRO_1000123755" description="Tetraacyldisaccharide 4'-kinase">
    <location>
        <begin position="1"/>
        <end position="328"/>
    </location>
</feature>
<feature type="binding site" evidence="1">
    <location>
        <begin position="55"/>
        <end position="62"/>
    </location>
    <ligand>
        <name>ATP</name>
        <dbReference type="ChEBI" id="CHEBI:30616"/>
    </ligand>
</feature>
<name>LPXK_YERPG</name>
<accession>A9R7I8</accession>
<evidence type="ECO:0000255" key="1">
    <source>
        <dbReference type="HAMAP-Rule" id="MF_00409"/>
    </source>
</evidence>
<proteinExistence type="inferred from homology"/>
<sequence length="328" mass="36139">MIERIWSGQSRLYLLLLPLSWLYGAVTWLIRASYRLGLRSAWRSPVPVIIVGNLTAGGNGKTPVVIWLVEQLQQRGYRVGVVSRGYGGKSAVYPLLLSDNTTTAQAGDEPVLIFQRTGAPVAVSPKRADAIKALLQSHAVDFIITDDGLQHYALQRDFELVVIDGVRRFGNGWWLPAGPMREREGRLRSVDAAITNGGLAAEGEIPMQLVAREAVNLVTGQRQPAEQLQHVVAMAGIGHPPRFFATLNLLGIKPENEHAFADHQDYSLAQLSRLTSGPQILLMTEKDAVKCRAFALPNWWYLPVDAQLPSDRADKLLLNIQALSPDTK</sequence>
<reference key="1">
    <citation type="journal article" date="2010" name="J. Bacteriol.">
        <title>Genome sequence of the deep-rooted Yersinia pestis strain Angola reveals new insights into the evolution and pangenome of the plague bacterium.</title>
        <authorList>
            <person name="Eppinger M."/>
            <person name="Worsham P.L."/>
            <person name="Nikolich M.P."/>
            <person name="Riley D.R."/>
            <person name="Sebastian Y."/>
            <person name="Mou S."/>
            <person name="Achtman M."/>
            <person name="Lindler L.E."/>
            <person name="Ravel J."/>
        </authorList>
    </citation>
    <scope>NUCLEOTIDE SEQUENCE [LARGE SCALE GENOMIC DNA]</scope>
    <source>
        <strain>Angola</strain>
    </source>
</reference>
<keyword id="KW-0067">ATP-binding</keyword>
<keyword id="KW-0418">Kinase</keyword>
<keyword id="KW-0441">Lipid A biosynthesis</keyword>
<keyword id="KW-0444">Lipid biosynthesis</keyword>
<keyword id="KW-0443">Lipid metabolism</keyword>
<keyword id="KW-0547">Nucleotide-binding</keyword>
<keyword id="KW-0808">Transferase</keyword>